<feature type="chain" id="PRO_1000193365" description="DNA repair protein RecO">
    <location>
        <begin position="1"/>
        <end position="243"/>
    </location>
</feature>
<keyword id="KW-0227">DNA damage</keyword>
<keyword id="KW-0233">DNA recombination</keyword>
<keyword id="KW-0234">DNA repair</keyword>
<keyword id="KW-1185">Reference proteome</keyword>
<proteinExistence type="inferred from homology"/>
<organism>
    <name type="scientific">Caulobacter vibrioides (strain NA1000 / CB15N)</name>
    <name type="common">Caulobacter crescentus</name>
    <dbReference type="NCBI Taxonomy" id="565050"/>
    <lineage>
        <taxon>Bacteria</taxon>
        <taxon>Pseudomonadati</taxon>
        <taxon>Pseudomonadota</taxon>
        <taxon>Alphaproteobacteria</taxon>
        <taxon>Caulobacterales</taxon>
        <taxon>Caulobacteraceae</taxon>
        <taxon>Caulobacter</taxon>
    </lineage>
</organism>
<sequence length="243" mass="26043">MEWEDEAYVLSARSHGETGAIVELLTEARGKVAAHVAGAASRRMKPFLQPGARVIVRYRAKVEGQLGSATLEPMGEGPSSLFDDRLALAGLSAAAAVAAAALPEREAHPGAFHALEALIRVLEIPEIWPAVYVRYEAGLLQELGFGLDLSKCAATGAFDDLVYVSPRTGRAVSREAGKPYHDKLLPLPPFMLSSQGGLAEGDVKAGLDITGHFLEQFVFGPLNRPLPPARLWLLDRLAEADKL</sequence>
<dbReference type="EMBL" id="CP001340">
    <property type="protein sequence ID" value="ACL95100.1"/>
    <property type="molecule type" value="Genomic_DNA"/>
</dbReference>
<dbReference type="RefSeq" id="WP_012640273.1">
    <property type="nucleotide sequence ID" value="NC_011916.1"/>
</dbReference>
<dbReference type="RefSeq" id="YP_002517008.1">
    <property type="nucleotide sequence ID" value="NC_011916.1"/>
</dbReference>
<dbReference type="SMR" id="B8GVD0"/>
<dbReference type="GeneID" id="7331613"/>
<dbReference type="KEGG" id="ccs:CCNA_01635"/>
<dbReference type="PATRIC" id="fig|565050.3.peg.1611"/>
<dbReference type="HOGENOM" id="CLU_086029_0_0_5"/>
<dbReference type="OrthoDB" id="9804792at2"/>
<dbReference type="PhylomeDB" id="B8GVD0"/>
<dbReference type="Proteomes" id="UP000001364">
    <property type="component" value="Chromosome"/>
</dbReference>
<dbReference type="GO" id="GO:0043590">
    <property type="term" value="C:bacterial nucleoid"/>
    <property type="evidence" value="ECO:0007669"/>
    <property type="project" value="TreeGrafter"/>
</dbReference>
<dbReference type="GO" id="GO:0006310">
    <property type="term" value="P:DNA recombination"/>
    <property type="evidence" value="ECO:0007669"/>
    <property type="project" value="UniProtKB-UniRule"/>
</dbReference>
<dbReference type="GO" id="GO:0006302">
    <property type="term" value="P:double-strand break repair"/>
    <property type="evidence" value="ECO:0007669"/>
    <property type="project" value="TreeGrafter"/>
</dbReference>
<dbReference type="Gene3D" id="2.40.50.140">
    <property type="entry name" value="Nucleic acid-binding proteins"/>
    <property type="match status" value="1"/>
</dbReference>
<dbReference type="Gene3D" id="1.20.1440.120">
    <property type="entry name" value="Recombination protein O, C-terminal domain"/>
    <property type="match status" value="1"/>
</dbReference>
<dbReference type="HAMAP" id="MF_00201">
    <property type="entry name" value="RecO"/>
    <property type="match status" value="1"/>
</dbReference>
<dbReference type="InterPro" id="IPR037278">
    <property type="entry name" value="ARFGAP/RecO"/>
</dbReference>
<dbReference type="InterPro" id="IPR022572">
    <property type="entry name" value="DNA_rep/recomb_RecO_N"/>
</dbReference>
<dbReference type="InterPro" id="IPR012340">
    <property type="entry name" value="NA-bd_OB-fold"/>
</dbReference>
<dbReference type="InterPro" id="IPR003717">
    <property type="entry name" value="RecO"/>
</dbReference>
<dbReference type="InterPro" id="IPR042242">
    <property type="entry name" value="RecO_C"/>
</dbReference>
<dbReference type="NCBIfam" id="TIGR00613">
    <property type="entry name" value="reco"/>
    <property type="match status" value="1"/>
</dbReference>
<dbReference type="PANTHER" id="PTHR33991">
    <property type="entry name" value="DNA REPAIR PROTEIN RECO"/>
    <property type="match status" value="1"/>
</dbReference>
<dbReference type="PANTHER" id="PTHR33991:SF1">
    <property type="entry name" value="DNA REPAIR PROTEIN RECO"/>
    <property type="match status" value="1"/>
</dbReference>
<dbReference type="Pfam" id="PF02565">
    <property type="entry name" value="RecO_C"/>
    <property type="match status" value="1"/>
</dbReference>
<dbReference type="Pfam" id="PF11967">
    <property type="entry name" value="RecO_N"/>
    <property type="match status" value="1"/>
</dbReference>
<dbReference type="SUPFAM" id="SSF57863">
    <property type="entry name" value="ArfGap/RecO-like zinc finger"/>
    <property type="match status" value="1"/>
</dbReference>
<dbReference type="SUPFAM" id="SSF50249">
    <property type="entry name" value="Nucleic acid-binding proteins"/>
    <property type="match status" value="1"/>
</dbReference>
<protein>
    <recommendedName>
        <fullName evidence="1">DNA repair protein RecO</fullName>
    </recommendedName>
    <alternativeName>
        <fullName evidence="1">Recombination protein O</fullName>
    </alternativeName>
</protein>
<reference key="1">
    <citation type="journal article" date="2010" name="J. Bacteriol.">
        <title>The genetic basis of laboratory adaptation in Caulobacter crescentus.</title>
        <authorList>
            <person name="Marks M.E."/>
            <person name="Castro-Rojas C.M."/>
            <person name="Teiling C."/>
            <person name="Du L."/>
            <person name="Kapatral V."/>
            <person name="Walunas T.L."/>
            <person name="Crosson S."/>
        </authorList>
    </citation>
    <scope>NUCLEOTIDE SEQUENCE [LARGE SCALE GENOMIC DNA]</scope>
    <source>
        <strain>NA1000 / CB15N</strain>
    </source>
</reference>
<accession>B8GVD0</accession>
<gene>
    <name evidence="1" type="primary">recO</name>
    <name type="ordered locus">CCNA_01635</name>
</gene>
<name>RECO_CAUVN</name>
<comment type="function">
    <text evidence="1">Involved in DNA repair and RecF pathway recombination.</text>
</comment>
<comment type="similarity">
    <text evidence="1">Belongs to the RecO family.</text>
</comment>
<evidence type="ECO:0000255" key="1">
    <source>
        <dbReference type="HAMAP-Rule" id="MF_00201"/>
    </source>
</evidence>